<accession>B0VLV6</accession>
<organism>
    <name type="scientific">Acinetobacter baumannii (strain SDF)</name>
    <dbReference type="NCBI Taxonomy" id="509170"/>
    <lineage>
        <taxon>Bacteria</taxon>
        <taxon>Pseudomonadati</taxon>
        <taxon>Pseudomonadota</taxon>
        <taxon>Gammaproteobacteria</taxon>
        <taxon>Moraxellales</taxon>
        <taxon>Moraxellaceae</taxon>
        <taxon>Acinetobacter</taxon>
        <taxon>Acinetobacter calcoaceticus/baumannii complex</taxon>
    </lineage>
</organism>
<name>PPNP_ACIBS</name>
<comment type="function">
    <text evidence="1">Catalyzes the phosphorolysis of diverse nucleosides, yielding D-ribose 1-phosphate and the respective free bases. Can use uridine, adenosine, guanosine, cytidine, thymidine, inosine and xanthosine as substrates. Also catalyzes the reverse reactions.</text>
</comment>
<comment type="catalytic activity">
    <reaction evidence="1">
        <text>a purine D-ribonucleoside + phosphate = a purine nucleobase + alpha-D-ribose 1-phosphate</text>
        <dbReference type="Rhea" id="RHEA:19805"/>
        <dbReference type="ChEBI" id="CHEBI:26386"/>
        <dbReference type="ChEBI" id="CHEBI:43474"/>
        <dbReference type="ChEBI" id="CHEBI:57720"/>
        <dbReference type="ChEBI" id="CHEBI:142355"/>
        <dbReference type="EC" id="2.4.2.1"/>
    </reaction>
</comment>
<comment type="catalytic activity">
    <reaction evidence="1">
        <text>adenosine + phosphate = alpha-D-ribose 1-phosphate + adenine</text>
        <dbReference type="Rhea" id="RHEA:27642"/>
        <dbReference type="ChEBI" id="CHEBI:16335"/>
        <dbReference type="ChEBI" id="CHEBI:16708"/>
        <dbReference type="ChEBI" id="CHEBI:43474"/>
        <dbReference type="ChEBI" id="CHEBI:57720"/>
        <dbReference type="EC" id="2.4.2.1"/>
    </reaction>
</comment>
<comment type="catalytic activity">
    <reaction evidence="1">
        <text>cytidine + phosphate = cytosine + alpha-D-ribose 1-phosphate</text>
        <dbReference type="Rhea" id="RHEA:52540"/>
        <dbReference type="ChEBI" id="CHEBI:16040"/>
        <dbReference type="ChEBI" id="CHEBI:17562"/>
        <dbReference type="ChEBI" id="CHEBI:43474"/>
        <dbReference type="ChEBI" id="CHEBI:57720"/>
        <dbReference type="EC" id="2.4.2.2"/>
    </reaction>
</comment>
<comment type="catalytic activity">
    <reaction evidence="1">
        <text>guanosine + phosphate = alpha-D-ribose 1-phosphate + guanine</text>
        <dbReference type="Rhea" id="RHEA:13233"/>
        <dbReference type="ChEBI" id="CHEBI:16235"/>
        <dbReference type="ChEBI" id="CHEBI:16750"/>
        <dbReference type="ChEBI" id="CHEBI:43474"/>
        <dbReference type="ChEBI" id="CHEBI:57720"/>
        <dbReference type="EC" id="2.4.2.1"/>
    </reaction>
</comment>
<comment type="catalytic activity">
    <reaction evidence="1">
        <text>inosine + phosphate = alpha-D-ribose 1-phosphate + hypoxanthine</text>
        <dbReference type="Rhea" id="RHEA:27646"/>
        <dbReference type="ChEBI" id="CHEBI:17368"/>
        <dbReference type="ChEBI" id="CHEBI:17596"/>
        <dbReference type="ChEBI" id="CHEBI:43474"/>
        <dbReference type="ChEBI" id="CHEBI:57720"/>
        <dbReference type="EC" id="2.4.2.1"/>
    </reaction>
</comment>
<comment type="catalytic activity">
    <reaction evidence="1">
        <text>thymidine + phosphate = 2-deoxy-alpha-D-ribose 1-phosphate + thymine</text>
        <dbReference type="Rhea" id="RHEA:16037"/>
        <dbReference type="ChEBI" id="CHEBI:17748"/>
        <dbReference type="ChEBI" id="CHEBI:17821"/>
        <dbReference type="ChEBI" id="CHEBI:43474"/>
        <dbReference type="ChEBI" id="CHEBI:57259"/>
        <dbReference type="EC" id="2.4.2.2"/>
    </reaction>
</comment>
<comment type="catalytic activity">
    <reaction evidence="1">
        <text>uridine + phosphate = alpha-D-ribose 1-phosphate + uracil</text>
        <dbReference type="Rhea" id="RHEA:24388"/>
        <dbReference type="ChEBI" id="CHEBI:16704"/>
        <dbReference type="ChEBI" id="CHEBI:17568"/>
        <dbReference type="ChEBI" id="CHEBI:43474"/>
        <dbReference type="ChEBI" id="CHEBI:57720"/>
        <dbReference type="EC" id="2.4.2.2"/>
    </reaction>
</comment>
<comment type="catalytic activity">
    <reaction evidence="1">
        <text>xanthosine + phosphate = alpha-D-ribose 1-phosphate + xanthine</text>
        <dbReference type="Rhea" id="RHEA:27638"/>
        <dbReference type="ChEBI" id="CHEBI:17712"/>
        <dbReference type="ChEBI" id="CHEBI:18107"/>
        <dbReference type="ChEBI" id="CHEBI:43474"/>
        <dbReference type="ChEBI" id="CHEBI:57720"/>
        <dbReference type="EC" id="2.4.2.1"/>
    </reaction>
</comment>
<comment type="similarity">
    <text evidence="1">Belongs to the nucleoside phosphorylase PpnP family.</text>
</comment>
<dbReference type="EC" id="2.4.2.1" evidence="1"/>
<dbReference type="EC" id="2.4.2.2" evidence="1"/>
<dbReference type="EMBL" id="CU468230">
    <property type="protein sequence ID" value="CAP02472.1"/>
    <property type="molecule type" value="Genomic_DNA"/>
</dbReference>
<dbReference type="SMR" id="B0VLV6"/>
<dbReference type="KEGG" id="abm:ABSDF3198"/>
<dbReference type="HOGENOM" id="CLU_157874_1_0_6"/>
<dbReference type="BioCyc" id="ABAU509170:GCL9-2647-MONOMER"/>
<dbReference type="Proteomes" id="UP000001741">
    <property type="component" value="Chromosome"/>
</dbReference>
<dbReference type="GO" id="GO:0005829">
    <property type="term" value="C:cytosol"/>
    <property type="evidence" value="ECO:0007669"/>
    <property type="project" value="TreeGrafter"/>
</dbReference>
<dbReference type="GO" id="GO:0047975">
    <property type="term" value="F:guanosine phosphorylase activity"/>
    <property type="evidence" value="ECO:0007669"/>
    <property type="project" value="UniProtKB-EC"/>
</dbReference>
<dbReference type="GO" id="GO:0004731">
    <property type="term" value="F:purine-nucleoside phosphorylase activity"/>
    <property type="evidence" value="ECO:0007669"/>
    <property type="project" value="UniProtKB-UniRule"/>
</dbReference>
<dbReference type="GO" id="GO:0009032">
    <property type="term" value="F:thymidine phosphorylase activity"/>
    <property type="evidence" value="ECO:0007669"/>
    <property type="project" value="UniProtKB-EC"/>
</dbReference>
<dbReference type="GO" id="GO:0004850">
    <property type="term" value="F:uridine phosphorylase activity"/>
    <property type="evidence" value="ECO:0007669"/>
    <property type="project" value="UniProtKB-EC"/>
</dbReference>
<dbReference type="CDD" id="cd20296">
    <property type="entry name" value="cupin_PpnP-like"/>
    <property type="match status" value="1"/>
</dbReference>
<dbReference type="Gene3D" id="2.60.120.10">
    <property type="entry name" value="Jelly Rolls"/>
    <property type="match status" value="1"/>
</dbReference>
<dbReference type="HAMAP" id="MF_01537">
    <property type="entry name" value="Nucleos_phosphorylase_PpnP"/>
    <property type="match status" value="1"/>
</dbReference>
<dbReference type="InterPro" id="IPR009664">
    <property type="entry name" value="Ppnp"/>
</dbReference>
<dbReference type="InterPro" id="IPR014710">
    <property type="entry name" value="RmlC-like_jellyroll"/>
</dbReference>
<dbReference type="InterPro" id="IPR011051">
    <property type="entry name" value="RmlC_Cupin_sf"/>
</dbReference>
<dbReference type="PANTHER" id="PTHR36540">
    <property type="entry name" value="PYRIMIDINE/PURINE NUCLEOSIDE PHOSPHORYLASE"/>
    <property type="match status" value="1"/>
</dbReference>
<dbReference type="PANTHER" id="PTHR36540:SF1">
    <property type="entry name" value="PYRIMIDINE_PURINE NUCLEOSIDE PHOSPHORYLASE"/>
    <property type="match status" value="1"/>
</dbReference>
<dbReference type="Pfam" id="PF06865">
    <property type="entry name" value="Ppnp"/>
    <property type="match status" value="1"/>
</dbReference>
<dbReference type="SUPFAM" id="SSF51182">
    <property type="entry name" value="RmlC-like cupins"/>
    <property type="match status" value="1"/>
</dbReference>
<evidence type="ECO:0000255" key="1">
    <source>
        <dbReference type="HAMAP-Rule" id="MF_01537"/>
    </source>
</evidence>
<reference key="1">
    <citation type="journal article" date="2008" name="PLoS ONE">
        <title>Comparative analysis of Acinetobacters: three genomes for three lifestyles.</title>
        <authorList>
            <person name="Vallenet D."/>
            <person name="Nordmann P."/>
            <person name="Barbe V."/>
            <person name="Poirel L."/>
            <person name="Mangenot S."/>
            <person name="Bataille E."/>
            <person name="Dossat C."/>
            <person name="Gas S."/>
            <person name="Kreimeyer A."/>
            <person name="Lenoble P."/>
            <person name="Oztas S."/>
            <person name="Poulain J."/>
            <person name="Segurens B."/>
            <person name="Robert C."/>
            <person name="Abergel C."/>
            <person name="Claverie J.-M."/>
            <person name="Raoult D."/>
            <person name="Medigue C."/>
            <person name="Weissenbach J."/>
            <person name="Cruveiller S."/>
        </authorList>
    </citation>
    <scope>NUCLEOTIDE SEQUENCE [LARGE SCALE GENOMIC DNA]</scope>
    <source>
        <strain>SDF</strain>
    </source>
</reference>
<feature type="chain" id="PRO_1000198646" description="Pyrimidine/purine nucleoside phosphorylase">
    <location>
        <begin position="1"/>
        <end position="108"/>
    </location>
</feature>
<keyword id="KW-0328">Glycosyltransferase</keyword>
<keyword id="KW-0808">Transferase</keyword>
<protein>
    <recommendedName>
        <fullName evidence="1">Pyrimidine/purine nucleoside phosphorylase</fullName>
        <ecNumber evidence="1">2.4.2.1</ecNumber>
        <ecNumber evidence="1">2.4.2.2</ecNumber>
    </recommendedName>
    <alternativeName>
        <fullName evidence="1">Adenosine phosphorylase</fullName>
    </alternativeName>
    <alternativeName>
        <fullName evidence="1">Cytidine phosphorylase</fullName>
    </alternativeName>
    <alternativeName>
        <fullName evidence="1">Guanosine phosphorylase</fullName>
    </alternativeName>
    <alternativeName>
        <fullName evidence="1">Inosine phosphorylase</fullName>
    </alternativeName>
    <alternativeName>
        <fullName evidence="1">Thymidine phosphorylase</fullName>
    </alternativeName>
    <alternativeName>
        <fullName evidence="1">Uridine phosphorylase</fullName>
    </alternativeName>
    <alternativeName>
        <fullName evidence="1">Xanthosine phosphorylase</fullName>
    </alternativeName>
</protein>
<gene>
    <name evidence="1" type="primary">ppnP</name>
    <name type="ordered locus">ABSDF3198</name>
</gene>
<sequence>MSSTQFDHVTVIKKSNVYFGGACISHTVQFEDGTKKTLGVILPTEQPLTFETHVPERMEIISGECRVKIADSNESELFRAGQSFYVPGNSVFKIETDEVLDYVCHLEG</sequence>
<proteinExistence type="inferred from homology"/>